<gene>
    <name type="primary">ABCB23</name>
    <name type="synonym">ATM1</name>
    <name type="synonym">STA2</name>
    <name type="ordered locus">At4g28630</name>
    <name type="ORF">T5F17.80</name>
</gene>
<reference key="1">
    <citation type="journal article" date="2007" name="J. Biol. Chem.">
        <title>Functional characterization of AtATM1, AtATM2, and AtATM3, a subfamily of Arabidopsis half-molecule ATP-binding cassette transporters implicated in iron homeostasis.</title>
        <authorList>
            <person name="Chen S."/>
            <person name="Sanchez-Fernandez R."/>
            <person name="Lyver E.R."/>
            <person name="Dancis A."/>
            <person name="Rea P.A."/>
        </authorList>
    </citation>
    <scope>NUCLEOTIDE SEQUENCE [MRNA]</scope>
    <scope>TISSUE SPECIFICITY</scope>
    <scope>SUBCELLULAR LOCATION</scope>
    <source>
        <strain>cv. Columbia</strain>
    </source>
</reference>
<reference key="2">
    <citation type="journal article" date="1999" name="Nature">
        <title>Sequence and analysis of chromosome 4 of the plant Arabidopsis thaliana.</title>
        <authorList>
            <person name="Mayer K.F.X."/>
            <person name="Schueller C."/>
            <person name="Wambutt R."/>
            <person name="Murphy G."/>
            <person name="Volckaert G."/>
            <person name="Pohl T."/>
            <person name="Duesterhoeft A."/>
            <person name="Stiekema W."/>
            <person name="Entian K.-D."/>
            <person name="Terryn N."/>
            <person name="Harris B."/>
            <person name="Ansorge W."/>
            <person name="Brandt P."/>
            <person name="Grivell L.A."/>
            <person name="Rieger M."/>
            <person name="Weichselgartner M."/>
            <person name="de Simone V."/>
            <person name="Obermaier B."/>
            <person name="Mache R."/>
            <person name="Mueller M."/>
            <person name="Kreis M."/>
            <person name="Delseny M."/>
            <person name="Puigdomenech P."/>
            <person name="Watson M."/>
            <person name="Schmidtheini T."/>
            <person name="Reichert B."/>
            <person name="Portetelle D."/>
            <person name="Perez-Alonso M."/>
            <person name="Boutry M."/>
            <person name="Bancroft I."/>
            <person name="Vos P."/>
            <person name="Hoheisel J."/>
            <person name="Zimmermann W."/>
            <person name="Wedler H."/>
            <person name="Ridley P."/>
            <person name="Langham S.-A."/>
            <person name="McCullagh B."/>
            <person name="Bilham L."/>
            <person name="Robben J."/>
            <person name="van der Schueren J."/>
            <person name="Grymonprez B."/>
            <person name="Chuang Y.-J."/>
            <person name="Vandenbussche F."/>
            <person name="Braeken M."/>
            <person name="Weltjens I."/>
            <person name="Voet M."/>
            <person name="Bastiaens I."/>
            <person name="Aert R."/>
            <person name="Defoor E."/>
            <person name="Weitzenegger T."/>
            <person name="Bothe G."/>
            <person name="Ramsperger U."/>
            <person name="Hilbert H."/>
            <person name="Braun M."/>
            <person name="Holzer E."/>
            <person name="Brandt A."/>
            <person name="Peters S."/>
            <person name="van Staveren M."/>
            <person name="Dirkse W."/>
            <person name="Mooijman P."/>
            <person name="Klein Lankhorst R."/>
            <person name="Rose M."/>
            <person name="Hauf J."/>
            <person name="Koetter P."/>
            <person name="Berneiser S."/>
            <person name="Hempel S."/>
            <person name="Feldpausch M."/>
            <person name="Lamberth S."/>
            <person name="Van den Daele H."/>
            <person name="De Keyser A."/>
            <person name="Buysshaert C."/>
            <person name="Gielen J."/>
            <person name="Villarroel R."/>
            <person name="De Clercq R."/>
            <person name="van Montagu M."/>
            <person name="Rogers J."/>
            <person name="Cronin A."/>
            <person name="Quail M.A."/>
            <person name="Bray-Allen S."/>
            <person name="Clark L."/>
            <person name="Doggett J."/>
            <person name="Hall S."/>
            <person name="Kay M."/>
            <person name="Lennard N."/>
            <person name="McLay K."/>
            <person name="Mayes R."/>
            <person name="Pettett A."/>
            <person name="Rajandream M.A."/>
            <person name="Lyne M."/>
            <person name="Benes V."/>
            <person name="Rechmann S."/>
            <person name="Borkova D."/>
            <person name="Bloecker H."/>
            <person name="Scharfe M."/>
            <person name="Grimm M."/>
            <person name="Loehnert T.-H."/>
            <person name="Dose S."/>
            <person name="de Haan M."/>
            <person name="Maarse A.C."/>
            <person name="Schaefer M."/>
            <person name="Mueller-Auer S."/>
            <person name="Gabel C."/>
            <person name="Fuchs M."/>
            <person name="Fartmann B."/>
            <person name="Granderath K."/>
            <person name="Dauner D."/>
            <person name="Herzl A."/>
            <person name="Neumann S."/>
            <person name="Argiriou A."/>
            <person name="Vitale D."/>
            <person name="Liguori R."/>
            <person name="Piravandi E."/>
            <person name="Massenet O."/>
            <person name="Quigley F."/>
            <person name="Clabauld G."/>
            <person name="Muendlein A."/>
            <person name="Felber R."/>
            <person name="Schnabl S."/>
            <person name="Hiller R."/>
            <person name="Schmidt W."/>
            <person name="Lecharny A."/>
            <person name="Aubourg S."/>
            <person name="Chefdor F."/>
            <person name="Cooke R."/>
            <person name="Berger C."/>
            <person name="Monfort A."/>
            <person name="Casacuberta E."/>
            <person name="Gibbons T."/>
            <person name="Weber N."/>
            <person name="Vandenbol M."/>
            <person name="Bargues M."/>
            <person name="Terol J."/>
            <person name="Torres A."/>
            <person name="Perez-Perez A."/>
            <person name="Purnelle B."/>
            <person name="Bent E."/>
            <person name="Johnson S."/>
            <person name="Tacon D."/>
            <person name="Jesse T."/>
            <person name="Heijnen L."/>
            <person name="Schwarz S."/>
            <person name="Scholler P."/>
            <person name="Heber S."/>
            <person name="Francs P."/>
            <person name="Bielke C."/>
            <person name="Frishman D."/>
            <person name="Haase D."/>
            <person name="Lemcke K."/>
            <person name="Mewes H.-W."/>
            <person name="Stocker S."/>
            <person name="Zaccaria P."/>
            <person name="Bevan M."/>
            <person name="Wilson R.K."/>
            <person name="de la Bastide M."/>
            <person name="Habermann K."/>
            <person name="Parnell L."/>
            <person name="Dedhia N."/>
            <person name="Gnoj L."/>
            <person name="Schutz K."/>
            <person name="Huang E."/>
            <person name="Spiegel L."/>
            <person name="Sekhon M."/>
            <person name="Murray J."/>
            <person name="Sheet P."/>
            <person name="Cordes M."/>
            <person name="Abu-Threideh J."/>
            <person name="Stoneking T."/>
            <person name="Kalicki J."/>
            <person name="Graves T."/>
            <person name="Harmon G."/>
            <person name="Edwards J."/>
            <person name="Latreille P."/>
            <person name="Courtney L."/>
            <person name="Cloud J."/>
            <person name="Abbott A."/>
            <person name="Scott K."/>
            <person name="Johnson D."/>
            <person name="Minx P."/>
            <person name="Bentley D."/>
            <person name="Fulton B."/>
            <person name="Miller N."/>
            <person name="Greco T."/>
            <person name="Kemp K."/>
            <person name="Kramer J."/>
            <person name="Fulton L."/>
            <person name="Mardis E."/>
            <person name="Dante M."/>
            <person name="Pepin K."/>
            <person name="Hillier L.W."/>
            <person name="Nelson J."/>
            <person name="Spieth J."/>
            <person name="Ryan E."/>
            <person name="Andrews S."/>
            <person name="Geisel C."/>
            <person name="Layman D."/>
            <person name="Du H."/>
            <person name="Ali J."/>
            <person name="Berghoff A."/>
            <person name="Jones K."/>
            <person name="Drone K."/>
            <person name="Cotton M."/>
            <person name="Joshu C."/>
            <person name="Antonoiu B."/>
            <person name="Zidanic M."/>
            <person name="Strong C."/>
            <person name="Sun H."/>
            <person name="Lamar B."/>
            <person name="Yordan C."/>
            <person name="Ma P."/>
            <person name="Zhong J."/>
            <person name="Preston R."/>
            <person name="Vil D."/>
            <person name="Shekher M."/>
            <person name="Matero A."/>
            <person name="Shah R."/>
            <person name="Swaby I.K."/>
            <person name="O'Shaughnessy A."/>
            <person name="Rodriguez M."/>
            <person name="Hoffman J."/>
            <person name="Till S."/>
            <person name="Granat S."/>
            <person name="Shohdy N."/>
            <person name="Hasegawa A."/>
            <person name="Hameed A."/>
            <person name="Lodhi M."/>
            <person name="Johnson A."/>
            <person name="Chen E."/>
            <person name="Marra M.A."/>
            <person name="Martienssen R."/>
            <person name="McCombie W.R."/>
        </authorList>
    </citation>
    <scope>NUCLEOTIDE SEQUENCE [LARGE SCALE GENOMIC DNA]</scope>
    <source>
        <strain>cv. Columbia</strain>
    </source>
</reference>
<reference key="3">
    <citation type="journal article" date="2017" name="Plant J.">
        <title>Araport11: a complete reannotation of the Arabidopsis thaliana reference genome.</title>
        <authorList>
            <person name="Cheng C.Y."/>
            <person name="Krishnakumar V."/>
            <person name="Chan A.P."/>
            <person name="Thibaud-Nissen F."/>
            <person name="Schobel S."/>
            <person name="Town C.D."/>
        </authorList>
    </citation>
    <scope>GENOME REANNOTATION</scope>
    <source>
        <strain>cv. Columbia</strain>
    </source>
</reference>
<reference key="4">
    <citation type="journal article" date="2003" name="Science">
        <title>Empirical analysis of transcriptional activity in the Arabidopsis genome.</title>
        <authorList>
            <person name="Yamada K."/>
            <person name="Lim J."/>
            <person name="Dale J.M."/>
            <person name="Chen H."/>
            <person name="Shinn P."/>
            <person name="Palm C.J."/>
            <person name="Southwick A.M."/>
            <person name="Wu H.C."/>
            <person name="Kim C.J."/>
            <person name="Nguyen M."/>
            <person name="Pham P.K."/>
            <person name="Cheuk R.F."/>
            <person name="Karlin-Newmann G."/>
            <person name="Liu S.X."/>
            <person name="Lam B."/>
            <person name="Sakano H."/>
            <person name="Wu T."/>
            <person name="Yu G."/>
            <person name="Miranda M."/>
            <person name="Quach H.L."/>
            <person name="Tripp M."/>
            <person name="Chang C.H."/>
            <person name="Lee J.M."/>
            <person name="Toriumi M.J."/>
            <person name="Chan M.M."/>
            <person name="Tang C.C."/>
            <person name="Onodera C.S."/>
            <person name="Deng J.M."/>
            <person name="Akiyama K."/>
            <person name="Ansari Y."/>
            <person name="Arakawa T."/>
            <person name="Banh J."/>
            <person name="Banno F."/>
            <person name="Bowser L."/>
            <person name="Brooks S.Y."/>
            <person name="Carninci P."/>
            <person name="Chao Q."/>
            <person name="Choy N."/>
            <person name="Enju A."/>
            <person name="Goldsmith A.D."/>
            <person name="Gurjal M."/>
            <person name="Hansen N.F."/>
            <person name="Hayashizaki Y."/>
            <person name="Johnson-Hopson C."/>
            <person name="Hsuan V.W."/>
            <person name="Iida K."/>
            <person name="Karnes M."/>
            <person name="Khan S."/>
            <person name="Koesema E."/>
            <person name="Ishida J."/>
            <person name="Jiang P.X."/>
            <person name="Jones T."/>
            <person name="Kawai J."/>
            <person name="Kamiya A."/>
            <person name="Meyers C."/>
            <person name="Nakajima M."/>
            <person name="Narusaka M."/>
            <person name="Seki M."/>
            <person name="Sakurai T."/>
            <person name="Satou M."/>
            <person name="Tamse R."/>
            <person name="Vaysberg M."/>
            <person name="Wallender E.K."/>
            <person name="Wong C."/>
            <person name="Yamamura Y."/>
            <person name="Yuan S."/>
            <person name="Shinozaki K."/>
            <person name="Davis R.W."/>
            <person name="Theologis A."/>
            <person name="Ecker J.R."/>
        </authorList>
    </citation>
    <scope>NUCLEOTIDE SEQUENCE [LARGE SCALE MRNA]</scope>
    <source>
        <strain>cv. Columbia</strain>
    </source>
</reference>
<reference key="5">
    <citation type="submission" date="2006-07" db="EMBL/GenBank/DDBJ databases">
        <title>Large-scale analysis of RIKEN Arabidopsis full-length (RAFL) cDNAs.</title>
        <authorList>
            <person name="Totoki Y."/>
            <person name="Seki M."/>
            <person name="Ishida J."/>
            <person name="Nakajima M."/>
            <person name="Enju A."/>
            <person name="Kamiya A."/>
            <person name="Narusaka M."/>
            <person name="Shin-i T."/>
            <person name="Nakagawa M."/>
            <person name="Sakamoto N."/>
            <person name="Oishi K."/>
            <person name="Kohara Y."/>
            <person name="Kobayashi M."/>
            <person name="Toyoda A."/>
            <person name="Sakaki Y."/>
            <person name="Sakurai T."/>
            <person name="Iida K."/>
            <person name="Akiyama K."/>
            <person name="Satou M."/>
            <person name="Toyoda T."/>
            <person name="Konagaya A."/>
            <person name="Carninci P."/>
            <person name="Kawai J."/>
            <person name="Hayashizaki Y."/>
            <person name="Shinozaki K."/>
        </authorList>
    </citation>
    <scope>NUCLEOTIDE SEQUENCE [LARGE SCALE MRNA]</scope>
    <source>
        <strain>cv. Columbia</strain>
    </source>
</reference>
<reference key="6">
    <citation type="journal article" date="2001" name="J. Biol. Chem.">
        <title>The Arabidopsis thaliana ABC protein superfamily, a complete inventory.</title>
        <authorList>
            <person name="Sanchez-Fernandez R."/>
            <person name="Davies T.G."/>
            <person name="Coleman J.O."/>
            <person name="Rea P.A."/>
        </authorList>
    </citation>
    <scope>GENE FAMILY</scope>
    <scope>NOMENCLATURE</scope>
</reference>
<reference key="7">
    <citation type="journal article" date="2002" name="Planta">
        <title>Multifunctionality of plant ABC transporters -- more than just detoxifiers.</title>
        <authorList>
            <person name="Martinoia E."/>
            <person name="Klein M."/>
            <person name="Geisler M."/>
            <person name="Bovet L."/>
            <person name="Forestier C."/>
            <person name="Kolukisaoglu H.U."/>
            <person name="Mueller-Roeber B."/>
            <person name="Schulz B."/>
        </authorList>
    </citation>
    <scope>GENE FAMILY</scope>
</reference>
<reference key="8">
    <citation type="journal article" date="2001" name="Plant Cell">
        <title>A mutation of the mitochondrial ABC transporter Sta1 leads to dwarfism and chlorosis in the Arabidopsis mutant starik.</title>
        <authorList>
            <person name="Kushnir S."/>
            <person name="Babiychuk E."/>
            <person name="Storozhenko S."/>
            <person name="Davey M.W."/>
            <person name="Papenbrock J."/>
            <person name="De Rycke R."/>
            <person name="Engler G."/>
            <person name="Stephan U.W."/>
            <person name="Lange H."/>
            <person name="Kispal G."/>
            <person name="Lill R."/>
            <person name="Van Montagu M."/>
        </authorList>
    </citation>
    <scope>FUNCTION</scope>
</reference>
<reference key="9">
    <citation type="journal article" date="2008" name="Trends Plant Sci.">
        <title>Plant ABC proteins - a unified nomenclature and updated inventory.</title>
        <authorList>
            <person name="Verrier P.J."/>
            <person name="Bird D."/>
            <person name="Burla B."/>
            <person name="Dassa E."/>
            <person name="Forestier C."/>
            <person name="Geisler M."/>
            <person name="Klein M."/>
            <person name="Kolukisaoglu H.U."/>
            <person name="Lee Y."/>
            <person name="Martinoia E."/>
            <person name="Murphy A."/>
            <person name="Rea P.A."/>
            <person name="Samuels L."/>
            <person name="Schulz B."/>
            <person name="Spalding E.J."/>
            <person name="Yazaki K."/>
            <person name="Theodoulou F.L."/>
        </authorList>
    </citation>
    <scope>GENE FAMILY</scope>
    <scope>NOMENCLATURE</scope>
</reference>
<reference key="10">
    <citation type="journal article" date="2009" name="Plant Physiol.">
        <title>An allelic mutant series of ATM3 reveals its key role in the biogenesis of cytosolic iron-sulfur proteins in Arabidopsis.</title>
        <authorList>
            <person name="Bernard D.G."/>
            <person name="Cheng Y."/>
            <person name="Zhao Y."/>
            <person name="Balk J."/>
        </authorList>
    </citation>
    <scope>DISRUPTION PHENOTYPE</scope>
</reference>
<reference key="11">
    <citation type="journal article" date="2010" name="Plant Cell">
        <title>A novel role for Arabidopsis mitochondrial ABC transporter ATM3 in molybdenum cofactor biosynthesis.</title>
        <authorList>
            <person name="Teschner J."/>
            <person name="Lachmann N."/>
            <person name="Schulze J."/>
            <person name="Geisler M."/>
            <person name="Selbach K."/>
            <person name="Santamaria-Araujo J."/>
            <person name="Balk J."/>
            <person name="Mendel R.R."/>
            <person name="Bittner F."/>
        </authorList>
    </citation>
    <scope>FUNCTION</scope>
</reference>
<reference key="12">
    <citation type="journal article" date="2015" name="J. Exp. Bot.">
        <title>Identification of cleavage sites and substrate proteins for two mitochondrial intermediate peptidases in Arabidopsis thaliana.</title>
        <authorList>
            <person name="Carrie C."/>
            <person name="Venne A.S."/>
            <person name="Zahedi R.P."/>
            <person name="Soll J."/>
        </authorList>
    </citation>
    <scope>IDENTIFICATION BY MASS SPECTROMETRY</scope>
    <scope>CLEAVAGE OF TRANSIT PEPTIDE AFTER PHE-63</scope>
</reference>
<name>AB23B_ARATH</name>
<sequence length="678" mass="75469">MMRGSRFLLSRASLYHRLRSDHHHHSFSSFIKRSSIQRSPAINAFFTDPSPSPSPVNARVFFFSTSTSTPNQDQTKTASSKKILRTISSYLWMKDNPELRFRVIAALACLIGAKFLNVQVPFLFKLSIDLLSSYSSSTITDSNPYLLAAFATPSSVLIGYGIARSGSSAFNELRTAVFSKVSLRTIRSVSRKVLSHLHDLDLRYHLNRETGALNRIIDRGSRAINTILSAMVFNVVPTILEISMVTGILAYNFGPVFALITSLSVGSYIAFTLVVTQYRTKFRKAMNQADNDASTRAIDSLVNYETVKYFNNEDYEARKYDDLLGRYEDAALQTQKSLAFLDFGQSFIFSTALSTSMVLCSQGIMNGEMTVGDLVMVNGLLFQLSLPLYFLGGVYRETVQGLVDMKSLFQLLEERSDIGDKDTETKLPPLVLRGGSISFENVHFSYLPERKILDGISFEVPAGKSVAIVGSSGSGKSTILRMIFRFFDTDSGNVRIDGQDIKEVTLESLRSCIGVVPQDTVLFNDTIFHNIHYGNLSATEEEVYDAARRAVIHDTIMKFPDKYSTAVGERGLMLSGGEKQRVALARAFLKSPAILLCDEATNALDSKTEAEIMKTFRSLASNRTCIFIAHRLTTAMQCDEIIVMEKGKVVEKGTHQVLLEKSGRYAKLWTQQNSTLEV</sequence>
<dbReference type="EMBL" id="AF287697">
    <property type="protein sequence ID" value="AAG09827.1"/>
    <property type="molecule type" value="mRNA"/>
</dbReference>
<dbReference type="EMBL" id="AL161573">
    <property type="protein sequence ID" value="CAB81451.1"/>
    <property type="status" value="ALT_INIT"/>
    <property type="molecule type" value="Genomic_DNA"/>
</dbReference>
<dbReference type="EMBL" id="CP002687">
    <property type="protein sequence ID" value="AEE85514.1"/>
    <property type="molecule type" value="Genomic_DNA"/>
</dbReference>
<dbReference type="EMBL" id="BT002506">
    <property type="protein sequence ID" value="AAO00866.1"/>
    <property type="molecule type" value="mRNA"/>
</dbReference>
<dbReference type="EMBL" id="BT008789">
    <property type="protein sequence ID" value="AAP68228.1"/>
    <property type="molecule type" value="mRNA"/>
</dbReference>
<dbReference type="EMBL" id="AK226985">
    <property type="protein sequence ID" value="BAE99052.1"/>
    <property type="molecule type" value="mRNA"/>
</dbReference>
<dbReference type="PIR" id="T10657">
    <property type="entry name" value="T10657"/>
</dbReference>
<dbReference type="RefSeq" id="NP_567813.1">
    <property type="nucleotide sequence ID" value="NM_119005.3"/>
</dbReference>
<dbReference type="SMR" id="Q9FUT3"/>
<dbReference type="BioGRID" id="14268">
    <property type="interactions" value="4"/>
</dbReference>
<dbReference type="FunCoup" id="Q9FUT3">
    <property type="interactions" value="3841"/>
</dbReference>
<dbReference type="IntAct" id="Q9FUT3">
    <property type="interactions" value="4"/>
</dbReference>
<dbReference type="STRING" id="3702.Q9FUT3"/>
<dbReference type="GlyGen" id="Q9FUT3">
    <property type="glycosylation" value="1 site"/>
</dbReference>
<dbReference type="iPTMnet" id="Q9FUT3"/>
<dbReference type="PaxDb" id="3702-AT4G28630.1"/>
<dbReference type="ProteomicsDB" id="244533"/>
<dbReference type="EnsemblPlants" id="AT4G28630.1">
    <property type="protein sequence ID" value="AT4G28630.1"/>
    <property type="gene ID" value="AT4G28630"/>
</dbReference>
<dbReference type="GeneID" id="828981"/>
<dbReference type="Gramene" id="AT4G28630.1">
    <property type="protein sequence ID" value="AT4G28630.1"/>
    <property type="gene ID" value="AT4G28630"/>
</dbReference>
<dbReference type="KEGG" id="ath:AT4G28630"/>
<dbReference type="Araport" id="AT4G28630"/>
<dbReference type="TAIR" id="AT4G28630">
    <property type="gene designation" value="ABCB23"/>
</dbReference>
<dbReference type="eggNOG" id="KOG0057">
    <property type="taxonomic scope" value="Eukaryota"/>
</dbReference>
<dbReference type="HOGENOM" id="CLU_000604_84_1_1"/>
<dbReference type="InParanoid" id="Q9FUT3"/>
<dbReference type="OMA" id="IMKTFRS"/>
<dbReference type="PhylomeDB" id="Q9FUT3"/>
<dbReference type="BioCyc" id="ARA:AT4G28630-MONOMER"/>
<dbReference type="PRO" id="PR:Q9FUT3"/>
<dbReference type="Proteomes" id="UP000006548">
    <property type="component" value="Chromosome 4"/>
</dbReference>
<dbReference type="ExpressionAtlas" id="Q9FUT3">
    <property type="expression patterns" value="baseline and differential"/>
</dbReference>
<dbReference type="GO" id="GO:0005743">
    <property type="term" value="C:mitochondrial inner membrane"/>
    <property type="evidence" value="ECO:0007669"/>
    <property type="project" value="UniProtKB-SubCell"/>
</dbReference>
<dbReference type="GO" id="GO:0005739">
    <property type="term" value="C:mitochondrion"/>
    <property type="evidence" value="ECO:0000314"/>
    <property type="project" value="UniProtKB"/>
</dbReference>
<dbReference type="GO" id="GO:0140359">
    <property type="term" value="F:ABC-type transporter activity"/>
    <property type="evidence" value="ECO:0007669"/>
    <property type="project" value="InterPro"/>
</dbReference>
<dbReference type="GO" id="GO:0005524">
    <property type="term" value="F:ATP binding"/>
    <property type="evidence" value="ECO:0007669"/>
    <property type="project" value="UniProtKB-KW"/>
</dbReference>
<dbReference type="GO" id="GO:0016887">
    <property type="term" value="F:ATP hydrolysis activity"/>
    <property type="evidence" value="ECO:0007669"/>
    <property type="project" value="InterPro"/>
</dbReference>
<dbReference type="GO" id="GO:0006879">
    <property type="term" value="P:intracellular iron ion homeostasis"/>
    <property type="evidence" value="ECO:0000316"/>
    <property type="project" value="UniProtKB"/>
</dbReference>
<dbReference type="GO" id="GO:0006826">
    <property type="term" value="P:iron ion transport"/>
    <property type="evidence" value="ECO:0007669"/>
    <property type="project" value="UniProtKB-KW"/>
</dbReference>
<dbReference type="GO" id="GO:0046686">
    <property type="term" value="P:response to cadmium ion"/>
    <property type="evidence" value="ECO:0000303"/>
    <property type="project" value="UniProtKB"/>
</dbReference>
<dbReference type="CDD" id="cd18582">
    <property type="entry name" value="ABC_6TM_ATM1_ABCB7"/>
    <property type="match status" value="1"/>
</dbReference>
<dbReference type="CDD" id="cd03253">
    <property type="entry name" value="ABCC_ATM1_transporter"/>
    <property type="match status" value="1"/>
</dbReference>
<dbReference type="FunFam" id="3.40.50.300:FF:001038">
    <property type="entry name" value="ABC transporter B family member 25"/>
    <property type="match status" value="1"/>
</dbReference>
<dbReference type="FunFam" id="1.20.1560.10:FF:000004">
    <property type="entry name" value="ATP-binding cassette sub-family B member 7"/>
    <property type="match status" value="1"/>
</dbReference>
<dbReference type="Gene3D" id="1.20.1560.10">
    <property type="entry name" value="ABC transporter type 1, transmembrane domain"/>
    <property type="match status" value="1"/>
</dbReference>
<dbReference type="Gene3D" id="3.40.50.300">
    <property type="entry name" value="P-loop containing nucleotide triphosphate hydrolases"/>
    <property type="match status" value="1"/>
</dbReference>
<dbReference type="InterPro" id="IPR003593">
    <property type="entry name" value="AAA+_ATPase"/>
</dbReference>
<dbReference type="InterPro" id="IPR011527">
    <property type="entry name" value="ABC1_TM_dom"/>
</dbReference>
<dbReference type="InterPro" id="IPR036640">
    <property type="entry name" value="ABC1_TM_sf"/>
</dbReference>
<dbReference type="InterPro" id="IPR003439">
    <property type="entry name" value="ABC_transporter-like_ATP-bd"/>
</dbReference>
<dbReference type="InterPro" id="IPR017871">
    <property type="entry name" value="ABC_transporter-like_CS"/>
</dbReference>
<dbReference type="InterPro" id="IPR027417">
    <property type="entry name" value="P-loop_NTPase"/>
</dbReference>
<dbReference type="InterPro" id="IPR039421">
    <property type="entry name" value="Type_1_exporter"/>
</dbReference>
<dbReference type="PANTHER" id="PTHR24221:SF494">
    <property type="entry name" value="ABC TRANSPORTER B FAMILY MEMBER 23, MITOCHONDRIAL-RELATED"/>
    <property type="match status" value="1"/>
</dbReference>
<dbReference type="PANTHER" id="PTHR24221">
    <property type="entry name" value="ATP-BINDING CASSETTE SUB-FAMILY B"/>
    <property type="match status" value="1"/>
</dbReference>
<dbReference type="Pfam" id="PF00664">
    <property type="entry name" value="ABC_membrane"/>
    <property type="match status" value="1"/>
</dbReference>
<dbReference type="Pfam" id="PF00005">
    <property type="entry name" value="ABC_tran"/>
    <property type="match status" value="1"/>
</dbReference>
<dbReference type="SMART" id="SM00382">
    <property type="entry name" value="AAA"/>
    <property type="match status" value="1"/>
</dbReference>
<dbReference type="SUPFAM" id="SSF90123">
    <property type="entry name" value="ABC transporter transmembrane region"/>
    <property type="match status" value="1"/>
</dbReference>
<dbReference type="SUPFAM" id="SSF52540">
    <property type="entry name" value="P-loop containing nucleoside triphosphate hydrolases"/>
    <property type="match status" value="1"/>
</dbReference>
<dbReference type="PROSITE" id="PS50929">
    <property type="entry name" value="ABC_TM1F"/>
    <property type="match status" value="1"/>
</dbReference>
<dbReference type="PROSITE" id="PS00211">
    <property type="entry name" value="ABC_TRANSPORTER_1"/>
    <property type="match status" value="1"/>
</dbReference>
<dbReference type="PROSITE" id="PS50893">
    <property type="entry name" value="ABC_TRANSPORTER_2"/>
    <property type="match status" value="1"/>
</dbReference>
<protein>
    <recommendedName>
        <fullName>ABC transporter B family member 23, mitochondrial</fullName>
        <shortName>ABC transporter ABCB.23</shortName>
        <shortName>AtABCB23</shortName>
    </recommendedName>
    <alternativeName>
        <fullName>ABC transporter of the mitochondrion 1</fullName>
        <shortName>AtATM1</shortName>
        <shortName>Iron-sulfur clusters transporter ATM1</shortName>
    </alternativeName>
    <alternativeName>
        <fullName>Protein STARIK 2</fullName>
    </alternativeName>
</protein>
<keyword id="KW-0067">ATP-binding</keyword>
<keyword id="KW-0406">Ion transport</keyword>
<keyword id="KW-0408">Iron</keyword>
<keyword id="KW-0410">Iron transport</keyword>
<keyword id="KW-0472">Membrane</keyword>
<keyword id="KW-0496">Mitochondrion</keyword>
<keyword id="KW-0999">Mitochondrion inner membrane</keyword>
<keyword id="KW-0547">Nucleotide-binding</keyword>
<keyword id="KW-1185">Reference proteome</keyword>
<keyword id="KW-0809">Transit peptide</keyword>
<keyword id="KW-0812">Transmembrane</keyword>
<keyword id="KW-1133">Transmembrane helix</keyword>
<keyword id="KW-0813">Transport</keyword>
<proteinExistence type="evidence at protein level"/>
<feature type="transit peptide" description="Mitochondrion" evidence="8">
    <location>
        <begin position="1"/>
        <end position="63"/>
    </location>
</feature>
<feature type="chain" id="PRO_0000379132" description="ABC transporter B family member 23, mitochondrial">
    <location>
        <begin position="64"/>
        <end position="678"/>
    </location>
</feature>
<feature type="transmembrane region" description="Helical" evidence="3">
    <location>
        <begin position="104"/>
        <end position="124"/>
    </location>
</feature>
<feature type="transmembrane region" description="Helical" evidence="3">
    <location>
        <begin position="143"/>
        <end position="163"/>
    </location>
</feature>
<feature type="transmembrane region" description="Helical" evidence="3">
    <location>
        <begin position="230"/>
        <end position="250"/>
    </location>
</feature>
<feature type="transmembrane region" description="Helical" evidence="3">
    <location>
        <begin position="255"/>
        <end position="275"/>
    </location>
</feature>
<feature type="transmembrane region" description="Helical" evidence="3">
    <location>
        <begin position="338"/>
        <end position="358"/>
    </location>
</feature>
<feature type="transmembrane region" description="Helical" evidence="3">
    <location>
        <begin position="374"/>
        <end position="394"/>
    </location>
</feature>
<feature type="domain" description="ABC transmembrane type-1" evidence="3">
    <location>
        <begin position="103"/>
        <end position="400"/>
    </location>
</feature>
<feature type="domain" description="ABC transporter" evidence="2">
    <location>
        <begin position="437"/>
        <end position="671"/>
    </location>
</feature>
<feature type="binding site" evidence="1">
    <location>
        <position position="446"/>
    </location>
    <ligand>
        <name>ATP</name>
        <dbReference type="ChEBI" id="CHEBI:30616"/>
    </ligand>
</feature>
<feature type="binding site" evidence="2">
    <location>
        <begin position="470"/>
        <end position="481"/>
    </location>
    <ligand>
        <name>ATP</name>
        <dbReference type="ChEBI" id="CHEBI:30616"/>
    </ligand>
</feature>
<accession>Q9FUT3</accession>
<accession>Q9M0G8</accession>
<comment type="function">
    <text evidence="4 7">Performs an essential function in the generation of cytoplasmic iron-sulfur proteins by mediating export of Fe/S cluster precursors synthesized by NFS1 and other mitochondrial proteins. Not involved in the export of cyclic pyranopterin monophosphate (cPMP) from mitochondria into the cytosol.</text>
</comment>
<comment type="subunit">
    <text evidence="1">Homodimer.</text>
</comment>
<comment type="subcellular location">
    <subcellularLocation>
        <location evidence="5 10">Mitochondrion inner membrane</location>
        <topology evidence="3 5">Multi-pass membrane protein</topology>
    </subcellularLocation>
</comment>
<comment type="tissue specificity">
    <text evidence="5">Expressed in roots, leaves, stems, flowers and siliques.</text>
</comment>
<comment type="disruption phenotype">
    <text evidence="6">No visible phenotype.</text>
</comment>
<comment type="similarity">
    <text evidence="9">Belongs to the ABC transporter superfamily. ABCB family. Heavy Metal importer (TC 3.A.1.210) subfamily.</text>
</comment>
<comment type="sequence caution" evidence="9">
    <conflict type="erroneous initiation">
        <sequence resource="EMBL-CDS" id="CAB81451"/>
    </conflict>
    <text>Truncated N-terminus.</text>
</comment>
<evidence type="ECO:0000250" key="1"/>
<evidence type="ECO:0000255" key="2">
    <source>
        <dbReference type="PROSITE-ProRule" id="PRU00434"/>
    </source>
</evidence>
<evidence type="ECO:0000255" key="3">
    <source>
        <dbReference type="PROSITE-ProRule" id="PRU00441"/>
    </source>
</evidence>
<evidence type="ECO:0000269" key="4">
    <source>
    </source>
</evidence>
<evidence type="ECO:0000269" key="5">
    <source>
    </source>
</evidence>
<evidence type="ECO:0000269" key="6">
    <source>
    </source>
</evidence>
<evidence type="ECO:0000269" key="7">
    <source>
    </source>
</evidence>
<evidence type="ECO:0000269" key="8">
    <source>
    </source>
</evidence>
<evidence type="ECO:0000305" key="9"/>
<evidence type="ECO:0000305" key="10">
    <source>
    </source>
</evidence>
<organism>
    <name type="scientific">Arabidopsis thaliana</name>
    <name type="common">Mouse-ear cress</name>
    <dbReference type="NCBI Taxonomy" id="3702"/>
    <lineage>
        <taxon>Eukaryota</taxon>
        <taxon>Viridiplantae</taxon>
        <taxon>Streptophyta</taxon>
        <taxon>Embryophyta</taxon>
        <taxon>Tracheophyta</taxon>
        <taxon>Spermatophyta</taxon>
        <taxon>Magnoliopsida</taxon>
        <taxon>eudicotyledons</taxon>
        <taxon>Gunneridae</taxon>
        <taxon>Pentapetalae</taxon>
        <taxon>rosids</taxon>
        <taxon>malvids</taxon>
        <taxon>Brassicales</taxon>
        <taxon>Brassicaceae</taxon>
        <taxon>Camelineae</taxon>
        <taxon>Arabidopsis</taxon>
    </lineage>
</organism>